<protein>
    <recommendedName>
        <fullName evidence="1">1-deoxy-D-xylulose-5-phosphate synthase</fullName>
        <ecNumber evidence="1">2.2.1.7</ecNumber>
    </recommendedName>
    <alternativeName>
        <fullName evidence="1">1-deoxyxylulose-5-phosphate synthase</fullName>
        <shortName evidence="1">DXP synthase</shortName>
        <shortName evidence="1">DXPS</shortName>
    </alternativeName>
</protein>
<comment type="function">
    <text evidence="1">Catalyzes the acyloin condensation reaction between C atoms 2 and 3 of pyruvate and glyceraldehyde 3-phosphate to yield 1-deoxy-D-xylulose-5-phosphate (DXP).</text>
</comment>
<comment type="catalytic activity">
    <reaction evidence="1">
        <text>D-glyceraldehyde 3-phosphate + pyruvate + H(+) = 1-deoxy-D-xylulose 5-phosphate + CO2</text>
        <dbReference type="Rhea" id="RHEA:12605"/>
        <dbReference type="ChEBI" id="CHEBI:15361"/>
        <dbReference type="ChEBI" id="CHEBI:15378"/>
        <dbReference type="ChEBI" id="CHEBI:16526"/>
        <dbReference type="ChEBI" id="CHEBI:57792"/>
        <dbReference type="ChEBI" id="CHEBI:59776"/>
        <dbReference type="EC" id="2.2.1.7"/>
    </reaction>
</comment>
<comment type="cofactor">
    <cofactor evidence="1">
        <name>Mg(2+)</name>
        <dbReference type="ChEBI" id="CHEBI:18420"/>
    </cofactor>
    <text evidence="1">Binds 1 Mg(2+) ion per subunit.</text>
</comment>
<comment type="cofactor">
    <cofactor evidence="1">
        <name>thiamine diphosphate</name>
        <dbReference type="ChEBI" id="CHEBI:58937"/>
    </cofactor>
    <text evidence="1">Binds 1 thiamine pyrophosphate per subunit.</text>
</comment>
<comment type="pathway">
    <text evidence="1">Metabolic intermediate biosynthesis; 1-deoxy-D-xylulose 5-phosphate biosynthesis; 1-deoxy-D-xylulose 5-phosphate from D-glyceraldehyde 3-phosphate and pyruvate: step 1/1.</text>
</comment>
<comment type="subunit">
    <text evidence="1">Homodimer.</text>
</comment>
<comment type="similarity">
    <text evidence="1">Belongs to the transketolase family. DXPS subfamily.</text>
</comment>
<organism>
    <name type="scientific">Corynebacterium jeikeium (strain K411)</name>
    <dbReference type="NCBI Taxonomy" id="306537"/>
    <lineage>
        <taxon>Bacteria</taxon>
        <taxon>Bacillati</taxon>
        <taxon>Actinomycetota</taxon>
        <taxon>Actinomycetes</taxon>
        <taxon>Mycobacteriales</taxon>
        <taxon>Corynebacteriaceae</taxon>
        <taxon>Corynebacterium</taxon>
    </lineage>
</organism>
<sequence>MGILDKVSSPADLKGLDADQLEQLAAEIREFLIQKVSATGGHLGPNLGVVELTIAMHRVFDSPSDPLIFDTGHQSYVHKILTGRRDLFDTLRQKDGLSGYPDRAESPHDWTESSHASASLSYADGLAKAFELTGQVHRHVVALVGDGALTGGMTWEALNNIAAAKNRSLVVVVNDNGRSYSPTIGGLAENLAALRLQPMYDRVMDTGKNALGRMGWVGDRAFQVIHGLKEGVKHTVIPHEMFPELGLKYIGPVDGHDLKQVENALRYAKDYGGPVIVHTVTQKGKGFDPAEQDEADQMHSTGVIDPITGESMAKKTEGAISWTKVFSNHLIDIANDREDIVAITAAMAGPTGLADFAKVHPSRTYDVGIAEQHAVTSAAGLALGGLHPVVAVYSTFLNRAFDQLLMDVALLKLGVTLVLDRAGITGSDGASHNGMWDLSITGIVPGIHVAAPRDARTLELALDRAVAVDDAPTVVRFPKGDAPAGIPAVREEDDYDVLFEQSGDKSEGRVLIVSFGALSKQALGAAQALCDANFSATVVDPHWVVPTADSLLEFARGFDLIVTIEDNGVHGGAGSRLHYDLSQAGIDVPVRNLGVPQEFLAHGSRGEVLEDLGLDAETVARTVVGYAEKL</sequence>
<reference key="1">
    <citation type="journal article" date="2005" name="J. Bacteriol.">
        <title>Complete genome sequence and analysis of the multiresistant nosocomial pathogen Corynebacterium jeikeium K411, a lipid-requiring bacterium of the human skin flora.</title>
        <authorList>
            <person name="Tauch A."/>
            <person name="Kaiser O."/>
            <person name="Hain T."/>
            <person name="Goesmann A."/>
            <person name="Weisshaar B."/>
            <person name="Albersmeier A."/>
            <person name="Bekel T."/>
            <person name="Bischoff N."/>
            <person name="Brune I."/>
            <person name="Chakraborty T."/>
            <person name="Kalinowski J."/>
            <person name="Meyer F."/>
            <person name="Rupp O."/>
            <person name="Schneiker S."/>
            <person name="Viehoever P."/>
            <person name="Puehler A."/>
        </authorList>
    </citation>
    <scope>NUCLEOTIDE SEQUENCE [LARGE SCALE GENOMIC DNA]</scope>
    <source>
        <strain>K411</strain>
    </source>
</reference>
<gene>
    <name evidence="1" type="primary">dxs</name>
    <name type="ordered locus">jk1078</name>
</gene>
<dbReference type="EC" id="2.2.1.7" evidence="1"/>
<dbReference type="EMBL" id="CR931997">
    <property type="protein sequence ID" value="CAI37242.1"/>
    <property type="molecule type" value="Genomic_DNA"/>
</dbReference>
<dbReference type="RefSeq" id="WP_011273634.1">
    <property type="nucleotide sequence ID" value="NC_007164.1"/>
</dbReference>
<dbReference type="SMR" id="Q4JVB5"/>
<dbReference type="STRING" id="306537.jk1078"/>
<dbReference type="KEGG" id="cjk:jk1078"/>
<dbReference type="PATRIC" id="fig|306537.10.peg.1090"/>
<dbReference type="eggNOG" id="COG1154">
    <property type="taxonomic scope" value="Bacteria"/>
</dbReference>
<dbReference type="HOGENOM" id="CLU_009227_1_4_11"/>
<dbReference type="OrthoDB" id="9803371at2"/>
<dbReference type="UniPathway" id="UPA00064">
    <property type="reaction ID" value="UER00091"/>
</dbReference>
<dbReference type="Proteomes" id="UP000000545">
    <property type="component" value="Chromosome"/>
</dbReference>
<dbReference type="GO" id="GO:0005829">
    <property type="term" value="C:cytosol"/>
    <property type="evidence" value="ECO:0007669"/>
    <property type="project" value="TreeGrafter"/>
</dbReference>
<dbReference type="GO" id="GO:0008661">
    <property type="term" value="F:1-deoxy-D-xylulose-5-phosphate synthase activity"/>
    <property type="evidence" value="ECO:0007669"/>
    <property type="project" value="UniProtKB-UniRule"/>
</dbReference>
<dbReference type="GO" id="GO:0000287">
    <property type="term" value="F:magnesium ion binding"/>
    <property type="evidence" value="ECO:0007669"/>
    <property type="project" value="UniProtKB-UniRule"/>
</dbReference>
<dbReference type="GO" id="GO:0030976">
    <property type="term" value="F:thiamine pyrophosphate binding"/>
    <property type="evidence" value="ECO:0007669"/>
    <property type="project" value="UniProtKB-UniRule"/>
</dbReference>
<dbReference type="GO" id="GO:0052865">
    <property type="term" value="P:1-deoxy-D-xylulose 5-phosphate biosynthetic process"/>
    <property type="evidence" value="ECO:0007669"/>
    <property type="project" value="UniProtKB-UniPathway"/>
</dbReference>
<dbReference type="GO" id="GO:0019288">
    <property type="term" value="P:isopentenyl diphosphate biosynthetic process, methylerythritol 4-phosphate pathway"/>
    <property type="evidence" value="ECO:0007669"/>
    <property type="project" value="TreeGrafter"/>
</dbReference>
<dbReference type="GO" id="GO:0016114">
    <property type="term" value="P:terpenoid biosynthetic process"/>
    <property type="evidence" value="ECO:0007669"/>
    <property type="project" value="UniProtKB-UniRule"/>
</dbReference>
<dbReference type="GO" id="GO:0009228">
    <property type="term" value="P:thiamine biosynthetic process"/>
    <property type="evidence" value="ECO:0007669"/>
    <property type="project" value="UniProtKB-UniRule"/>
</dbReference>
<dbReference type="CDD" id="cd02007">
    <property type="entry name" value="TPP_DXS"/>
    <property type="match status" value="1"/>
</dbReference>
<dbReference type="CDD" id="cd07033">
    <property type="entry name" value="TPP_PYR_DXS_TK_like"/>
    <property type="match status" value="1"/>
</dbReference>
<dbReference type="FunFam" id="3.40.50.970:FF:000005">
    <property type="entry name" value="1-deoxy-D-xylulose-5-phosphate synthase"/>
    <property type="match status" value="1"/>
</dbReference>
<dbReference type="Gene3D" id="3.40.50.920">
    <property type="match status" value="1"/>
</dbReference>
<dbReference type="Gene3D" id="3.40.50.970">
    <property type="match status" value="2"/>
</dbReference>
<dbReference type="HAMAP" id="MF_00315">
    <property type="entry name" value="DXP_synth"/>
    <property type="match status" value="1"/>
</dbReference>
<dbReference type="InterPro" id="IPR005477">
    <property type="entry name" value="Dxylulose-5-P_synthase"/>
</dbReference>
<dbReference type="InterPro" id="IPR029061">
    <property type="entry name" value="THDP-binding"/>
</dbReference>
<dbReference type="InterPro" id="IPR009014">
    <property type="entry name" value="Transketo_C/PFOR_II"/>
</dbReference>
<dbReference type="InterPro" id="IPR005475">
    <property type="entry name" value="Transketolase-like_Pyr-bd"/>
</dbReference>
<dbReference type="InterPro" id="IPR020826">
    <property type="entry name" value="Transketolase_BS"/>
</dbReference>
<dbReference type="InterPro" id="IPR033248">
    <property type="entry name" value="Transketolase_C"/>
</dbReference>
<dbReference type="InterPro" id="IPR049557">
    <property type="entry name" value="Transketolase_CS"/>
</dbReference>
<dbReference type="NCBIfam" id="TIGR00204">
    <property type="entry name" value="dxs"/>
    <property type="match status" value="1"/>
</dbReference>
<dbReference type="NCBIfam" id="NF003933">
    <property type="entry name" value="PRK05444.2-2"/>
    <property type="match status" value="1"/>
</dbReference>
<dbReference type="PANTHER" id="PTHR43322">
    <property type="entry name" value="1-D-DEOXYXYLULOSE 5-PHOSPHATE SYNTHASE-RELATED"/>
    <property type="match status" value="1"/>
</dbReference>
<dbReference type="PANTHER" id="PTHR43322:SF5">
    <property type="entry name" value="1-DEOXY-D-XYLULOSE-5-PHOSPHATE SYNTHASE, CHLOROPLASTIC"/>
    <property type="match status" value="1"/>
</dbReference>
<dbReference type="Pfam" id="PF13292">
    <property type="entry name" value="DXP_synthase_N"/>
    <property type="match status" value="1"/>
</dbReference>
<dbReference type="Pfam" id="PF02779">
    <property type="entry name" value="Transket_pyr"/>
    <property type="match status" value="1"/>
</dbReference>
<dbReference type="Pfam" id="PF02780">
    <property type="entry name" value="Transketolase_C"/>
    <property type="match status" value="1"/>
</dbReference>
<dbReference type="SMART" id="SM00861">
    <property type="entry name" value="Transket_pyr"/>
    <property type="match status" value="1"/>
</dbReference>
<dbReference type="SUPFAM" id="SSF52518">
    <property type="entry name" value="Thiamin diphosphate-binding fold (THDP-binding)"/>
    <property type="match status" value="1"/>
</dbReference>
<dbReference type="SUPFAM" id="SSF52922">
    <property type="entry name" value="TK C-terminal domain-like"/>
    <property type="match status" value="1"/>
</dbReference>
<dbReference type="PROSITE" id="PS00801">
    <property type="entry name" value="TRANSKETOLASE_1"/>
    <property type="match status" value="1"/>
</dbReference>
<dbReference type="PROSITE" id="PS00802">
    <property type="entry name" value="TRANSKETOLASE_2"/>
    <property type="match status" value="1"/>
</dbReference>
<keyword id="KW-0414">Isoprene biosynthesis</keyword>
<keyword id="KW-0460">Magnesium</keyword>
<keyword id="KW-0479">Metal-binding</keyword>
<keyword id="KW-1185">Reference proteome</keyword>
<keyword id="KW-0784">Thiamine biosynthesis</keyword>
<keyword id="KW-0786">Thiamine pyrophosphate</keyword>
<keyword id="KW-0808">Transferase</keyword>
<proteinExistence type="inferred from homology"/>
<feature type="chain" id="PRO_0000256405" description="1-deoxy-D-xylulose-5-phosphate synthase">
    <location>
        <begin position="1"/>
        <end position="630"/>
    </location>
</feature>
<feature type="binding site" evidence="1">
    <location>
        <position position="73"/>
    </location>
    <ligand>
        <name>thiamine diphosphate</name>
        <dbReference type="ChEBI" id="CHEBI:58937"/>
    </ligand>
</feature>
<feature type="binding site" evidence="1">
    <location>
        <begin position="114"/>
        <end position="116"/>
    </location>
    <ligand>
        <name>thiamine diphosphate</name>
        <dbReference type="ChEBI" id="CHEBI:58937"/>
    </ligand>
</feature>
<feature type="binding site" evidence="1">
    <location>
        <position position="146"/>
    </location>
    <ligand>
        <name>Mg(2+)</name>
        <dbReference type="ChEBI" id="CHEBI:18420"/>
    </ligand>
</feature>
<feature type="binding site" evidence="1">
    <location>
        <begin position="147"/>
        <end position="148"/>
    </location>
    <ligand>
        <name>thiamine diphosphate</name>
        <dbReference type="ChEBI" id="CHEBI:58937"/>
    </ligand>
</feature>
<feature type="binding site" evidence="1">
    <location>
        <position position="176"/>
    </location>
    <ligand>
        <name>Mg(2+)</name>
        <dbReference type="ChEBI" id="CHEBI:18420"/>
    </ligand>
</feature>
<feature type="binding site" evidence="1">
    <location>
        <position position="176"/>
    </location>
    <ligand>
        <name>thiamine diphosphate</name>
        <dbReference type="ChEBI" id="CHEBI:58937"/>
    </ligand>
</feature>
<feature type="binding site" evidence="1">
    <location>
        <position position="287"/>
    </location>
    <ligand>
        <name>thiamine diphosphate</name>
        <dbReference type="ChEBI" id="CHEBI:58937"/>
    </ligand>
</feature>
<feature type="binding site" evidence="1">
    <location>
        <position position="371"/>
    </location>
    <ligand>
        <name>thiamine diphosphate</name>
        <dbReference type="ChEBI" id="CHEBI:58937"/>
    </ligand>
</feature>
<name>DXS_CORJK</name>
<accession>Q4JVB5</accession>
<evidence type="ECO:0000255" key="1">
    <source>
        <dbReference type="HAMAP-Rule" id="MF_00315"/>
    </source>
</evidence>